<accession>P68174</accession>
<accession>P15324</accession>
<dbReference type="EC" id="3.5.99.13"/>
<dbReference type="EMBL" id="X63431">
    <property type="protein sequence ID" value="CAA45025.1"/>
    <property type="molecule type" value="Genomic_DNA"/>
</dbReference>
<dbReference type="PIR" id="S29894">
    <property type="entry name" value="S29894"/>
</dbReference>
<dbReference type="SMR" id="P68174"/>
<dbReference type="GlyCosmos" id="P68174">
    <property type="glycosylation" value="1 site, No reported glycans"/>
</dbReference>
<dbReference type="UniPathway" id="UPA00311">
    <property type="reaction ID" value="UER00447"/>
</dbReference>
<dbReference type="GO" id="GO:0012505">
    <property type="term" value="C:endomembrane system"/>
    <property type="evidence" value="ECO:0007669"/>
    <property type="project" value="TreeGrafter"/>
</dbReference>
<dbReference type="GO" id="GO:0005773">
    <property type="term" value="C:vacuole"/>
    <property type="evidence" value="ECO:0007669"/>
    <property type="project" value="UniProtKB-SubCell"/>
</dbReference>
<dbReference type="GO" id="GO:0016844">
    <property type="term" value="F:strictosidine synthase activity"/>
    <property type="evidence" value="ECO:0007669"/>
    <property type="project" value="RHEA"/>
</dbReference>
<dbReference type="GO" id="GO:0009820">
    <property type="term" value="P:alkaloid metabolic process"/>
    <property type="evidence" value="ECO:0007669"/>
    <property type="project" value="UniProtKB-KW"/>
</dbReference>
<dbReference type="Gene3D" id="2.120.10.30">
    <property type="entry name" value="TolB, C-terminal domain"/>
    <property type="match status" value="1"/>
</dbReference>
<dbReference type="InterPro" id="IPR011042">
    <property type="entry name" value="6-blade_b-propeller_TolB-like"/>
</dbReference>
<dbReference type="InterPro" id="IPR018119">
    <property type="entry name" value="Strictosidine_synth_cons-reg"/>
</dbReference>
<dbReference type="PANTHER" id="PTHR10426:SF136">
    <property type="entry name" value="PROTEIN STRICTOSIDINE SYNTHASE-LIKE 9-LIKE"/>
    <property type="match status" value="1"/>
</dbReference>
<dbReference type="PANTHER" id="PTHR10426">
    <property type="entry name" value="STRICTOSIDINE SYNTHASE-RELATED"/>
    <property type="match status" value="1"/>
</dbReference>
<dbReference type="Pfam" id="PF03088">
    <property type="entry name" value="Str_synth"/>
    <property type="match status" value="1"/>
</dbReference>
<dbReference type="SUPFAM" id="SSF63829">
    <property type="entry name" value="Calcium-dependent phosphotriesterase"/>
    <property type="match status" value="1"/>
</dbReference>
<proteinExistence type="inferred from homology"/>
<sequence>KLSDSQTMALFTVFLLFLSSSLALSSPILKEILIEAPSYAPNSFTFDSTNKGFYTSVQDGRVIKYEGPNSGFVDFAYASPYWNKAFCENSTDAEKRPLCGRTYDISYNLQNNQLYIVDCYYHLSVVGSEGGHATQLATSVDGVPFKWLYAVTVDQRTGIVYFTDVSTLYDDRGVQQIMDTSDKTGRLIKYDPSTKETTLLLKELHVPGGAEVSADSSFVLVAEFLSHQIVKYWLEGPKKGTAEVLVKIPNPGNIKRNADGHFWVSSSEELDGNMHGRVDPKGIKFDEFGNILEVIPLPPPFAGEHFEQIQEHDGLLYIGTLFHGSVGILVYDKKGNSFVSSH</sequence>
<protein>
    <recommendedName>
        <fullName>Strictosidine synthase</fullName>
        <ecNumber>3.5.99.13</ecNumber>
    </recommendedName>
</protein>
<organism>
    <name type="scientific">Rauvolfia mannii</name>
    <dbReference type="NCBI Taxonomy" id="4062"/>
    <lineage>
        <taxon>Eukaryota</taxon>
        <taxon>Viridiplantae</taxon>
        <taxon>Streptophyta</taxon>
        <taxon>Embryophyta</taxon>
        <taxon>Tracheophyta</taxon>
        <taxon>Spermatophyta</taxon>
        <taxon>Magnoliopsida</taxon>
        <taxon>eudicotyledons</taxon>
        <taxon>Gunneridae</taxon>
        <taxon>Pentapetalae</taxon>
        <taxon>asterids</taxon>
        <taxon>lamiids</taxon>
        <taxon>Gentianales</taxon>
        <taxon>Apocynaceae</taxon>
        <taxon>Rauvolfioideae</taxon>
        <taxon>Vinceae</taxon>
        <taxon>Rauvolfiinae</taxon>
        <taxon>Rauvolfia</taxon>
    </lineage>
</organism>
<feature type="signal peptide" evidence="1">
    <location>
        <begin position="1" status="less than"/>
        <end position="20"/>
    </location>
</feature>
<feature type="chain" id="PRO_0000033333" description="Strictosidine synthase">
    <location>
        <begin position="21"/>
        <end position="342"/>
    </location>
</feature>
<feature type="glycosylation site" description="N-linked (GlcNAc...) asparagine" evidence="2">
    <location>
        <position position="89"/>
    </location>
</feature>
<feature type="non-terminal residue">
    <location>
        <position position="1"/>
    </location>
</feature>
<evidence type="ECO:0000250" key="1"/>
<evidence type="ECO:0000255" key="2"/>
<evidence type="ECO:0000305" key="3"/>
<reference key="1">
    <citation type="journal article" date="1992" name="Arch. Biochem. Biophys.">
        <title>Strictosidine synthase from Rauvolfia serpentina: analysis of a gene involved in indole alkaloid biosynthesis.</title>
        <authorList>
            <person name="Bracher D."/>
            <person name="Kutchan T.M."/>
        </authorList>
    </citation>
    <scope>NUCLEOTIDE SEQUENCE [GENOMIC DNA]</scope>
</reference>
<comment type="function">
    <text>Catalyzes the stereospecific condensation of tryptamine with secologanin to form strictosidine, the key intermediate of indole alkaloid biosynthesis.</text>
</comment>
<comment type="catalytic activity">
    <reaction>
        <text>3alpha(S)-strictosidine + H2O = secologanin + tryptamine</text>
        <dbReference type="Rhea" id="RHEA:15013"/>
        <dbReference type="ChEBI" id="CHEBI:15377"/>
        <dbReference type="ChEBI" id="CHEBI:18002"/>
        <dbReference type="ChEBI" id="CHEBI:57887"/>
        <dbReference type="ChEBI" id="CHEBI:58193"/>
        <dbReference type="EC" id="3.5.99.13"/>
    </reaction>
</comment>
<comment type="pathway">
    <text>Alkaloid biosynthesis; 3alpha(S)-strictosidine biosynthesis; 3alpha(S)-strictosidine from secologanin and tryptamine: step 1/1.</text>
</comment>
<comment type="subunit">
    <text>Monomer.</text>
</comment>
<comment type="subcellular location">
    <subcellularLocation>
        <location>Vacuole</location>
    </subcellularLocation>
</comment>
<comment type="similarity">
    <text evidence="3">Belongs to the strictosidine synthase family.</text>
</comment>
<name>STSY_RAUMA</name>
<gene>
    <name type="primary">STR1</name>
</gene>
<keyword id="KW-0017">Alkaloid metabolism</keyword>
<keyword id="KW-0325">Glycoprotein</keyword>
<keyword id="KW-0378">Hydrolase</keyword>
<keyword id="KW-0732">Signal</keyword>
<keyword id="KW-0926">Vacuole</keyword>